<dbReference type="EC" id="4.3.2.1" evidence="1"/>
<dbReference type="EMBL" id="CP000727">
    <property type="protein sequence ID" value="ABS38692.1"/>
    <property type="molecule type" value="Genomic_DNA"/>
</dbReference>
<dbReference type="EMBL" id="AM412317">
    <property type="protein sequence ID" value="CAL84230.1"/>
    <property type="molecule type" value="Genomic_DNA"/>
</dbReference>
<dbReference type="RefSeq" id="WP_011986965.1">
    <property type="nucleotide sequence ID" value="NC_009698.1"/>
</dbReference>
<dbReference type="RefSeq" id="YP_001255168.1">
    <property type="nucleotide sequence ID" value="NC_009495.1"/>
</dbReference>
<dbReference type="RefSeq" id="YP_001388381.1">
    <property type="nucleotide sequence ID" value="NC_009698.1"/>
</dbReference>
<dbReference type="SMR" id="A5I5A3"/>
<dbReference type="GeneID" id="5186924"/>
<dbReference type="KEGG" id="cbh:CLC_2543"/>
<dbReference type="KEGG" id="cbo:CBO2669"/>
<dbReference type="PATRIC" id="fig|413999.7.peg.2652"/>
<dbReference type="HOGENOM" id="CLU_027272_2_3_9"/>
<dbReference type="UniPathway" id="UPA00068">
    <property type="reaction ID" value="UER00114"/>
</dbReference>
<dbReference type="PRO" id="PR:A5I5A3"/>
<dbReference type="Proteomes" id="UP000001986">
    <property type="component" value="Chromosome"/>
</dbReference>
<dbReference type="GO" id="GO:0005829">
    <property type="term" value="C:cytosol"/>
    <property type="evidence" value="ECO:0000318"/>
    <property type="project" value="GO_Central"/>
</dbReference>
<dbReference type="GO" id="GO:0004056">
    <property type="term" value="F:argininosuccinate lyase activity"/>
    <property type="evidence" value="ECO:0000318"/>
    <property type="project" value="GO_Central"/>
</dbReference>
<dbReference type="GO" id="GO:0042450">
    <property type="term" value="P:arginine biosynthetic process via ornithine"/>
    <property type="evidence" value="ECO:0000318"/>
    <property type="project" value="GO_Central"/>
</dbReference>
<dbReference type="GO" id="GO:0006526">
    <property type="term" value="P:L-arginine biosynthetic process"/>
    <property type="evidence" value="ECO:0007669"/>
    <property type="project" value="UniProtKB-UniRule"/>
</dbReference>
<dbReference type="CDD" id="cd01359">
    <property type="entry name" value="Argininosuccinate_lyase"/>
    <property type="match status" value="1"/>
</dbReference>
<dbReference type="FunFam" id="1.10.275.10:FF:000002">
    <property type="entry name" value="Argininosuccinate lyase"/>
    <property type="match status" value="1"/>
</dbReference>
<dbReference type="FunFam" id="1.10.40.30:FF:000001">
    <property type="entry name" value="Argininosuccinate lyase"/>
    <property type="match status" value="1"/>
</dbReference>
<dbReference type="FunFam" id="1.20.200.10:FF:000002">
    <property type="entry name" value="Argininosuccinate lyase"/>
    <property type="match status" value="1"/>
</dbReference>
<dbReference type="Gene3D" id="1.10.40.30">
    <property type="entry name" value="Fumarase/aspartase (C-terminal domain)"/>
    <property type="match status" value="1"/>
</dbReference>
<dbReference type="Gene3D" id="1.20.200.10">
    <property type="entry name" value="Fumarase/aspartase (Central domain)"/>
    <property type="match status" value="1"/>
</dbReference>
<dbReference type="Gene3D" id="1.10.275.10">
    <property type="entry name" value="Fumarase/aspartase (N-terminal domain)"/>
    <property type="match status" value="1"/>
</dbReference>
<dbReference type="HAMAP" id="MF_00006">
    <property type="entry name" value="Arg_succ_lyase"/>
    <property type="match status" value="1"/>
</dbReference>
<dbReference type="InterPro" id="IPR029419">
    <property type="entry name" value="Arg_succ_lyase_C"/>
</dbReference>
<dbReference type="InterPro" id="IPR009049">
    <property type="entry name" value="Argininosuccinate_lyase"/>
</dbReference>
<dbReference type="InterPro" id="IPR024083">
    <property type="entry name" value="Fumarase/histidase_N"/>
</dbReference>
<dbReference type="InterPro" id="IPR020557">
    <property type="entry name" value="Fumarate_lyase_CS"/>
</dbReference>
<dbReference type="InterPro" id="IPR000362">
    <property type="entry name" value="Fumarate_lyase_fam"/>
</dbReference>
<dbReference type="InterPro" id="IPR022761">
    <property type="entry name" value="Fumarate_lyase_N"/>
</dbReference>
<dbReference type="InterPro" id="IPR008948">
    <property type="entry name" value="L-Aspartase-like"/>
</dbReference>
<dbReference type="NCBIfam" id="TIGR00838">
    <property type="entry name" value="argH"/>
    <property type="match status" value="1"/>
</dbReference>
<dbReference type="PANTHER" id="PTHR43814">
    <property type="entry name" value="ARGININOSUCCINATE LYASE"/>
    <property type="match status" value="1"/>
</dbReference>
<dbReference type="PANTHER" id="PTHR43814:SF1">
    <property type="entry name" value="ARGININOSUCCINATE LYASE"/>
    <property type="match status" value="1"/>
</dbReference>
<dbReference type="Pfam" id="PF14698">
    <property type="entry name" value="ASL_C2"/>
    <property type="match status" value="1"/>
</dbReference>
<dbReference type="Pfam" id="PF00206">
    <property type="entry name" value="Lyase_1"/>
    <property type="match status" value="1"/>
</dbReference>
<dbReference type="PRINTS" id="PR00145">
    <property type="entry name" value="ARGSUCLYASE"/>
</dbReference>
<dbReference type="PRINTS" id="PR00149">
    <property type="entry name" value="FUMRATELYASE"/>
</dbReference>
<dbReference type="SUPFAM" id="SSF48557">
    <property type="entry name" value="L-aspartase-like"/>
    <property type="match status" value="1"/>
</dbReference>
<dbReference type="PROSITE" id="PS00163">
    <property type="entry name" value="FUMARATE_LYASES"/>
    <property type="match status" value="1"/>
</dbReference>
<protein>
    <recommendedName>
        <fullName evidence="1">Argininosuccinate lyase</fullName>
        <shortName evidence="1">ASAL</shortName>
        <ecNumber evidence="1">4.3.2.1</ecNumber>
    </recommendedName>
    <alternativeName>
        <fullName evidence="1">Arginosuccinase</fullName>
    </alternativeName>
</protein>
<organism>
    <name type="scientific">Clostridium botulinum (strain Hall / ATCC 3502 / NCTC 13319 / Type A)</name>
    <dbReference type="NCBI Taxonomy" id="441771"/>
    <lineage>
        <taxon>Bacteria</taxon>
        <taxon>Bacillati</taxon>
        <taxon>Bacillota</taxon>
        <taxon>Clostridia</taxon>
        <taxon>Eubacteriales</taxon>
        <taxon>Clostridiaceae</taxon>
        <taxon>Clostridium</taxon>
    </lineage>
</organism>
<proteinExistence type="inferred from homology"/>
<name>ARLY_CLOBH</name>
<gene>
    <name evidence="1" type="primary">argH</name>
    <name type="ordered locus">CBO2669</name>
    <name type="ordered locus">CLC_2543</name>
</gene>
<reference key="1">
    <citation type="journal article" date="2007" name="Genome Res.">
        <title>Genome sequence of a proteolytic (Group I) Clostridium botulinum strain Hall A and comparative analysis of the clostridial genomes.</title>
        <authorList>
            <person name="Sebaihia M."/>
            <person name="Peck M.W."/>
            <person name="Minton N.P."/>
            <person name="Thomson N.R."/>
            <person name="Holden M.T.G."/>
            <person name="Mitchell W.J."/>
            <person name="Carter A.T."/>
            <person name="Bentley S.D."/>
            <person name="Mason D.R."/>
            <person name="Crossman L."/>
            <person name="Paul C.J."/>
            <person name="Ivens A."/>
            <person name="Wells-Bennik M.H.J."/>
            <person name="Davis I.J."/>
            <person name="Cerdeno-Tarraga A.M."/>
            <person name="Churcher C."/>
            <person name="Quail M.A."/>
            <person name="Chillingworth T."/>
            <person name="Feltwell T."/>
            <person name="Fraser A."/>
            <person name="Goodhead I."/>
            <person name="Hance Z."/>
            <person name="Jagels K."/>
            <person name="Larke N."/>
            <person name="Maddison M."/>
            <person name="Moule S."/>
            <person name="Mungall K."/>
            <person name="Norbertczak H."/>
            <person name="Rabbinowitsch E."/>
            <person name="Sanders M."/>
            <person name="Simmonds M."/>
            <person name="White B."/>
            <person name="Whithead S."/>
            <person name="Parkhill J."/>
        </authorList>
    </citation>
    <scope>NUCLEOTIDE SEQUENCE [LARGE SCALE GENOMIC DNA]</scope>
    <source>
        <strain>Hall / ATCC 3502 / NCTC 13319 / Type A</strain>
    </source>
</reference>
<reference key="2">
    <citation type="journal article" date="2007" name="PLoS ONE">
        <title>Analysis of the neurotoxin complex genes in Clostridium botulinum A1-A4 and B1 strains: BoNT/A3, /Ba4 and /B1 clusters are located within plasmids.</title>
        <authorList>
            <person name="Smith T.J."/>
            <person name="Hill K.K."/>
            <person name="Foley B.T."/>
            <person name="Detter J.C."/>
            <person name="Munk A.C."/>
            <person name="Bruce D.C."/>
            <person name="Doggett N.A."/>
            <person name="Smith L.A."/>
            <person name="Marks J.D."/>
            <person name="Xie G."/>
            <person name="Brettin T.S."/>
        </authorList>
    </citation>
    <scope>NUCLEOTIDE SEQUENCE [LARGE SCALE GENOMIC DNA]</scope>
    <source>
        <strain>Hall / ATCC 3502 / NCTC 13319 / Type A</strain>
    </source>
</reference>
<comment type="catalytic activity">
    <reaction evidence="1">
        <text>2-(N(omega)-L-arginino)succinate = fumarate + L-arginine</text>
        <dbReference type="Rhea" id="RHEA:24020"/>
        <dbReference type="ChEBI" id="CHEBI:29806"/>
        <dbReference type="ChEBI" id="CHEBI:32682"/>
        <dbReference type="ChEBI" id="CHEBI:57472"/>
        <dbReference type="EC" id="4.3.2.1"/>
    </reaction>
</comment>
<comment type="pathway">
    <text evidence="1">Amino-acid biosynthesis; L-arginine biosynthesis; L-arginine from L-ornithine and carbamoyl phosphate: step 3/3.</text>
</comment>
<comment type="subcellular location">
    <subcellularLocation>
        <location evidence="1">Cytoplasm</location>
    </subcellularLocation>
</comment>
<comment type="similarity">
    <text evidence="1">Belongs to the lyase 1 family. Argininosuccinate lyase subfamily.</text>
</comment>
<evidence type="ECO:0000255" key="1">
    <source>
        <dbReference type="HAMAP-Rule" id="MF_00006"/>
    </source>
</evidence>
<sequence length="440" mass="50482">MKLWGGRFKEEESKLMEDFNSSLSFDKKLYYEDIKGSIAHVKMLTNQNIIKEEEKEKILLGLEEILKEIDEGILKIEGDYEDIHSFVEINLINKIGNVGKKLHTGRSRNDQVALDMKLYAKKSTEEVIECLKELMDSLIKVGNENNYIMPGYTHLQRAQVVTFRYHLLAYFEMFKRDEKRLENALEILNESPLGSGALAGSTYNIDKEYTAKLLGFRKPVDNFLDGVSDRDYIIELISKFSIIMMHLSRLSEELILWSSSEFRFIQIGDAYSTGSSIMPQKKNPDGAELIRGKIGRVYGDLISILTVMKSLPLAYNKDMQEDKEPFFDAKDTVISCLKVMEGIISTLKVNKENLMKSVKKGFLNATEAADYLVNKGMAFRDAHKVIGEVVIYCEDKNSAIEDLSLEELKQFSDLFCEDIYEFIDYKNSINKGIKKEMGYF</sequence>
<feature type="chain" id="PRO_1000000468" description="Argininosuccinate lyase">
    <location>
        <begin position="1"/>
        <end position="440"/>
    </location>
</feature>
<keyword id="KW-0028">Amino-acid biosynthesis</keyword>
<keyword id="KW-0055">Arginine biosynthesis</keyword>
<keyword id="KW-0963">Cytoplasm</keyword>
<keyword id="KW-0456">Lyase</keyword>
<keyword id="KW-1185">Reference proteome</keyword>
<accession>A5I5A3</accession>
<accession>A7G6G6</accession>